<protein>
    <recommendedName>
        <fullName evidence="10">E3 ubiquitin-protein ligase TRIM32</fullName>
        <ecNumber evidence="1">2.3.2.27</ecNumber>
    </recommendedName>
    <alternativeName>
        <fullName evidence="10">RING-type E3 ubiquitin transferase TRIM32</fullName>
    </alternativeName>
    <alternativeName>
        <fullName>Tripartite motif-containing protein 32</fullName>
    </alternativeName>
</protein>
<reference key="1">
    <citation type="journal article" date="2004" name="Carcinogenesis">
        <title>RING protein Trim32 associated with skin carcinogenesis has anti-apoptotic and E3-ubiquitin ligase properties.</title>
        <authorList>
            <person name="Horn E.J."/>
            <person name="Albor A."/>
            <person name="Liu Y."/>
            <person name="El-Hizawi S."/>
            <person name="Vanderbeek G.E."/>
            <person name="Babcock M."/>
            <person name="Bowden G.T."/>
            <person name="Hennings H."/>
            <person name="Lozano G."/>
            <person name="Weinberg W.C."/>
            <person name="Kulesz-Martin M."/>
        </authorList>
    </citation>
    <scope>NUCLEOTIDE SEQUENCE [MRNA]</scope>
    <scope>FUNCTION</scope>
    <scope>SUBCELLULAR LOCATION</scope>
    <scope>UBIQUITINATION</scope>
    <scope>TISSUE SPECIFICITY</scope>
    <scope>INDUCTION</scope>
    <source>
        <tissue>Testis</tissue>
    </source>
</reference>
<reference key="2">
    <citation type="journal article" date="2009" name="PLoS Biol.">
        <title>Lineage-specific biology revealed by a finished genome assembly of the mouse.</title>
        <authorList>
            <person name="Church D.M."/>
            <person name="Goodstadt L."/>
            <person name="Hillier L.W."/>
            <person name="Zody M.C."/>
            <person name="Goldstein S."/>
            <person name="She X."/>
            <person name="Bult C.J."/>
            <person name="Agarwala R."/>
            <person name="Cherry J.L."/>
            <person name="DiCuccio M."/>
            <person name="Hlavina W."/>
            <person name="Kapustin Y."/>
            <person name="Meric P."/>
            <person name="Maglott D."/>
            <person name="Birtle Z."/>
            <person name="Marques A.C."/>
            <person name="Graves T."/>
            <person name="Zhou S."/>
            <person name="Teague B."/>
            <person name="Potamousis K."/>
            <person name="Churas C."/>
            <person name="Place M."/>
            <person name="Herschleb J."/>
            <person name="Runnheim R."/>
            <person name="Forrest D."/>
            <person name="Amos-Landgraf J."/>
            <person name="Schwartz D.C."/>
            <person name="Cheng Z."/>
            <person name="Lindblad-Toh K."/>
            <person name="Eichler E.E."/>
            <person name="Ponting C.P."/>
        </authorList>
    </citation>
    <scope>NUCLEOTIDE SEQUENCE [LARGE SCALE GENOMIC DNA]</scope>
    <source>
        <strain>C57BL/6J</strain>
    </source>
</reference>
<reference key="3">
    <citation type="journal article" date="2004" name="Genome Res.">
        <title>The status, quality, and expansion of the NIH full-length cDNA project: the Mammalian Gene Collection (MGC).</title>
        <authorList>
            <consortium name="The MGC Project Team"/>
        </authorList>
    </citation>
    <scope>NUCLEOTIDE SEQUENCE [LARGE SCALE MRNA]</scope>
    <source>
        <tissue>Retina</tissue>
    </source>
</reference>
<reference key="4">
    <citation type="journal article" date="2006" name="J. Biol. Chem.">
        <title>The interaction of Piasy with Trim32, an E3-ubiquitin ligase mutated in limb-girdle muscular dystrophy type 2H, promotes Piasy degradation and regulates UVB-induced keratinocyte apoptosis through NFkappaB.</title>
        <authorList>
            <person name="Albor A."/>
            <person name="El-Hizawi S."/>
            <person name="Horn E.J."/>
            <person name="Laederich M."/>
            <person name="Frosk P."/>
            <person name="Wrogemann K."/>
            <person name="Kulesz-Martin M."/>
        </authorList>
    </citation>
    <scope>FUNCTION</scope>
    <scope>SUBCELLULAR LOCATION</scope>
    <scope>INTERACTION WITH PIAS4</scope>
</reference>
<reference key="5">
    <citation type="journal article" date="2010" name="Cell">
        <title>A tissue-specific atlas of mouse protein phosphorylation and expression.</title>
        <authorList>
            <person name="Huttlin E.L."/>
            <person name="Jedrychowski M.P."/>
            <person name="Elias J.E."/>
            <person name="Goswami T."/>
            <person name="Rad R."/>
            <person name="Beausoleil S.A."/>
            <person name="Villen J."/>
            <person name="Haas W."/>
            <person name="Sowa M.E."/>
            <person name="Gygi S.P."/>
        </authorList>
    </citation>
    <scope>PHOSPHORYLATION [LARGE SCALE ANALYSIS] AT SER-330 AND SER-337</scope>
    <scope>IDENTIFICATION BY MASS SPECTROMETRY [LARGE SCALE ANALYSIS]</scope>
    <source>
        <tissue>Brain</tissue>
    </source>
</reference>
<reference key="6">
    <citation type="journal article" date="2017" name="PLoS Pathog.">
        <title>TRIM32-TAX1BP1-dependent selective autophagic degradation of TRIF negatively regulates TLR3/4-mediated innate immune responses.</title>
        <authorList>
            <person name="Yang Q."/>
            <person name="Liu T.T."/>
            <person name="Lin H."/>
            <person name="Zhang M."/>
            <person name="Wei J."/>
            <person name="Luo W.W."/>
            <person name="Hu Y.H."/>
            <person name="Zhong B."/>
            <person name="Hu M.M."/>
            <person name="Shu H.B."/>
        </authorList>
    </citation>
    <scope>FUNCTION</scope>
    <scope>DISRUPTION PHENOTYPE</scope>
</reference>
<reference key="7">
    <citation type="journal article" date="2023" name="Gut Pathog.">
        <title>TRIM32 reduced the recruitment of innate immune cells and the killing capacity of Listeria monocytogenes by inhibiting secretion of chemokines.</title>
        <authorList>
            <person name="Ouyang X."/>
            <person name="Liu P."/>
            <person name="Zheng Y."/>
            <person name="Jiang H."/>
            <person name="Lv Q."/>
            <person name="Huang W."/>
            <person name="Hao H."/>
            <person name="Pian Y."/>
            <person name="Kong D."/>
            <person name="Jiang Y."/>
        </authorList>
    </citation>
    <scope>FUNCTION</scope>
    <scope>DISRUPTION PHENOTYPE</scope>
</reference>
<feature type="chain" id="PRO_0000056247" description="E3 ubiquitin-protein ligase TRIM32">
    <location>
        <begin position="1"/>
        <end position="655"/>
    </location>
</feature>
<feature type="repeat" description="NHL 1">
    <location>
        <begin position="360"/>
        <end position="403"/>
    </location>
</feature>
<feature type="repeat" description="NHL 2">
    <location>
        <begin position="417"/>
        <end position="460"/>
    </location>
</feature>
<feature type="repeat" description="NHL 3">
    <location>
        <begin position="461"/>
        <end position="501"/>
    </location>
</feature>
<feature type="repeat" description="NHL 4">
    <location>
        <begin position="564"/>
        <end position="607"/>
    </location>
</feature>
<feature type="repeat" description="NHL 5">
    <location>
        <begin position="608"/>
        <end position="648"/>
    </location>
</feature>
<feature type="zinc finger region" description="RING-type" evidence="4">
    <location>
        <begin position="21"/>
        <end position="66"/>
    </location>
</feature>
<feature type="zinc finger region" description="B box-type; atypical" evidence="3">
    <location>
        <begin position="96"/>
        <end position="139"/>
    </location>
</feature>
<feature type="region of interest" description="Disordered" evidence="5">
    <location>
        <begin position="327"/>
        <end position="347"/>
    </location>
</feature>
<feature type="coiled-coil region" evidence="2">
    <location>
        <begin position="139"/>
        <end position="198"/>
    </location>
</feature>
<feature type="binding site" evidence="3">
    <location>
        <position position="101"/>
    </location>
    <ligand>
        <name>Zn(2+)</name>
        <dbReference type="ChEBI" id="CHEBI:29105"/>
    </ligand>
</feature>
<feature type="binding site" evidence="3">
    <location>
        <position position="104"/>
    </location>
    <ligand>
        <name>Zn(2+)</name>
        <dbReference type="ChEBI" id="CHEBI:29105"/>
    </ligand>
</feature>
<feature type="binding site" evidence="3">
    <location>
        <position position="124"/>
    </location>
    <ligand>
        <name>Zn(2+)</name>
        <dbReference type="ChEBI" id="CHEBI:29105"/>
    </ligand>
</feature>
<feature type="binding site" evidence="3">
    <location>
        <position position="129"/>
    </location>
    <ligand>
        <name>Zn(2+)</name>
        <dbReference type="ChEBI" id="CHEBI:29105"/>
    </ligand>
</feature>
<feature type="modified residue" description="Phosphoserine; by CHEK2" evidence="1">
    <location>
        <position position="56"/>
    </location>
</feature>
<feature type="modified residue" description="Phosphoserine" evidence="12">
    <location>
        <position position="330"/>
    </location>
</feature>
<feature type="modified residue" description="Phosphoserine" evidence="12">
    <location>
        <position position="337"/>
    </location>
</feature>
<feature type="modified residue" description="Phosphoserine" evidence="1">
    <location>
        <position position="341"/>
    </location>
</feature>
<feature type="sequence conflict" description="In Ref. 1; AAO13297." evidence="10" ref="1">
    <original>A</original>
    <variation>V</variation>
    <location>
        <position position="169"/>
    </location>
</feature>
<sequence>MAAAAAASHLNLDALREVLECPICMESFTEEQLRPKLLHCGHTICRQCLEKLLASSINGVRCPFCSKITRITSLTQLTDNLTVLKIIDTAGLSEAVGLLMCRGCGRRLPRQFCRSCGVVLCEPCREADHQPPGHCTLPVKEAAEERRRDFGEKLTRLRELTGELQRRKAALEGVSRDLQARYKAVLQEYGHEERRIQEELARSRKFFTGSLAEVEKSNSQVVEEQSYLLNIAEVQAVSRCDYFLAKIKQADVALLEETADEEEPELTASLPRELTLQDVELLKVGHVGPLQIGQAVKKPRTVNMEDSWAGEEGAASSASASVTFREMDMSPEEVAPSPRASPAKQRSSEAASGIQQCLFLKKMGAKGSTPGMFNLPVSLYVTSQSEVLVADRGNYRIQVFNRKGFLKEIRRSPSGIDSFVLSFLGADLPNLTPLSVAMNCHGLIGVTDSYDNSLKVYTMDGHCVACHRSQLSKPWGITALPSGQFVVTDVEGGKLWCFTVDRGAGVVKYSCLCSAVRPKFVTCDAEGTVYFTQGLGLNVENRQNEHHLEGGFSIGSVGPDGQLGRQISHFFSENEDFRCIAGMCVDARGDLIVADSSRKEILHFPKGGGYSVLIREGLTCPVGIALTPKGQLLVLDCWDHCVKIYSYHLRRYSTP</sequence>
<gene>
    <name evidence="11" type="primary">Trim32</name>
</gene>
<proteinExistence type="evidence at protein level"/>
<accession>Q8CH72</accession>
<accession>Q8K055</accession>
<organism>
    <name type="scientific">Mus musculus</name>
    <name type="common">Mouse</name>
    <dbReference type="NCBI Taxonomy" id="10090"/>
    <lineage>
        <taxon>Eukaryota</taxon>
        <taxon>Metazoa</taxon>
        <taxon>Chordata</taxon>
        <taxon>Craniata</taxon>
        <taxon>Vertebrata</taxon>
        <taxon>Euteleostomi</taxon>
        <taxon>Mammalia</taxon>
        <taxon>Eutheria</taxon>
        <taxon>Euarchontoglires</taxon>
        <taxon>Glires</taxon>
        <taxon>Rodentia</taxon>
        <taxon>Myomorpha</taxon>
        <taxon>Muroidea</taxon>
        <taxon>Muridae</taxon>
        <taxon>Murinae</taxon>
        <taxon>Mus</taxon>
        <taxon>Mus</taxon>
    </lineage>
</organism>
<keyword id="KW-0175">Coiled coil</keyword>
<keyword id="KW-0963">Cytoplasm</keyword>
<keyword id="KW-0479">Metal-binding</keyword>
<keyword id="KW-0597">Phosphoprotein</keyword>
<keyword id="KW-1185">Reference proteome</keyword>
<keyword id="KW-0677">Repeat</keyword>
<keyword id="KW-0808">Transferase</keyword>
<keyword id="KW-0832">Ubl conjugation</keyword>
<keyword id="KW-0833">Ubl conjugation pathway</keyword>
<keyword id="KW-0862">Zinc</keyword>
<keyword id="KW-0863">Zinc-finger</keyword>
<name>TRI32_MOUSE</name>
<comment type="function">
    <text evidence="1 6 7 8 9">E3 ubiquitin ligase that plays a role in various biological processes including neural stem cell differentiation, innate immunity, inflammatory resonse and autophagy (PubMed:14578165, PubMed:37415157). Plays a role in virus-triggered induction of IFN-beta and TNF-alpha by mediating the ubiquitination of STING1. Mechanistically, targets STING1 for 'Lys-63'-linked ubiquitination which promotes the interaction of STING1 with TBK1. Regulates bacterial clearance and promotes autophagy in Mycobacterium tuberculosis-infected macrophages (By similarity). Negatively regulates TLR3/4-mediated innate immune and inflammatory response by triggering the autophagic degradation of TICAM1 in an E3 activity-independent manner (PubMed:28898289). Plays an essential role in oxidative stress induced cell death by inducing loss of transmembrane potential and enhancing mitochondrial reactive oxygen species (ROS) production during oxidative stress conditions. Ubiquitinates XIAP and targets it for proteasomal degradation. Ubiquitinates DTNBP1 (dysbindin) and promotes its degradation. May ubiquitinate BBS2 (By similarity). Ubiquitinates PIAS4/PIASY and promotes its degradation in keratinocytes treated with UVB and TNF-alpha (By similarity). Also acts as a regulator of autophagy by mediating formation of unanchored 'Lys-63'-linked polyubiquitin chains that activate ULK1: interaction with AMBRA1 is required for ULK1 activation. Positively regulates dendritic branching by promoting ubiquitination and subsequent degradation of the epigenetic factor CDYL (By similarity). Under metabolic stress and phosphorylation by CHK2, mediates 'Lys-63'-linked ubiquitination of ATG7 at 'Lys-41' to initiate autophagy (By similarity).</text>
</comment>
<comment type="catalytic activity">
    <reaction evidence="1">
        <text>S-ubiquitinyl-[E2 ubiquitin-conjugating enzyme]-L-cysteine + [acceptor protein]-L-lysine = [E2 ubiquitin-conjugating enzyme]-L-cysteine + N(6)-ubiquitinyl-[acceptor protein]-L-lysine.</text>
        <dbReference type="EC" id="2.3.2.27"/>
    </reaction>
</comment>
<comment type="pathway">
    <text evidence="1">Protein modification; protein ubiquitination.</text>
</comment>
<comment type="subunit">
    <text evidence="1 7">It self-associates. Interacts with DTNBP1 (By similarity). Interacts with PIAS4/PIASY upon treatment with UVB and TNF-alpha (PubMed:16816390). Interacts with AMBRA1; promoting activation of ULK1 through unanchored 'Lys-63'-linked polyubiquitin chains. Interacts with TICAM1 and TAX1BP1; these interactions target TICAM1 to TAX1BP1-mediated selective autophagic degradation (By similarity).</text>
</comment>
<comment type="interaction">
    <interactant intactId="EBI-773837">
        <id>Q8CH72</id>
    </interactant>
    <interactant intactId="EBI-2291996">
        <id>Q8CJG1</id>
        <label>Ago1</label>
    </interactant>
    <organismsDiffer>false</organismsDiffer>
    <experiments>2</experiments>
</comment>
<comment type="interaction">
    <interactant intactId="EBI-773837">
        <id>Q8CH72</id>
    </interactant>
    <interactant intactId="EBI-1183114">
        <id>P01108</id>
        <label>Myc</label>
    </interactant>
    <organismsDiffer>false</organismsDiffer>
    <experiments>2</experiments>
</comment>
<comment type="subcellular location">
    <subcellularLocation>
        <location evidence="6 7">Cytoplasm</location>
    </subcellularLocation>
    <text evidence="1">Localized in cytoplasmic bodies, often located around the nucleus.</text>
</comment>
<comment type="tissue specificity">
    <text evidence="6">Ubiquitous. High expression in brain.</text>
</comment>
<comment type="induction">
    <text evidence="6">By interferon alpha/UVB treatment.</text>
</comment>
<comment type="PTM">
    <text evidence="6">Ubiquitinated.</text>
</comment>
<comment type="PTM">
    <text evidence="1">Phosphorylation at Ser-56 by CHEK2 under oxidative stress, activates the E3 ligase activity and promotes ATG7 ubiquitination leading to positive regulation of the autophagosme assembly.</text>
</comment>
<comment type="disruption phenotype">
    <text evidence="8 9">Deletion mice are more sensitive to inflammatory death upon Salmonella typhimurium infection. They produce much higher levels of inflammatory cytokines including TNF-alpha and IL-6 and show much more serious inflammatory damage of their small intestinal villus (PubMed:28898289). Production of IFN-beta and IFN-gamma are however reduced at 1 and 3 days post infection while an increased macrophage-associated iNOS production is observed (PubMed:37415157).</text>
</comment>
<comment type="similarity">
    <text evidence="10">Belongs to the TRIM/RBCC family.</text>
</comment>
<dbReference type="EC" id="2.3.2.27" evidence="1"/>
<dbReference type="EMBL" id="AF347694">
    <property type="protein sequence ID" value="AAO13297.1"/>
    <property type="molecule type" value="mRNA"/>
</dbReference>
<dbReference type="EMBL" id="AL691456">
    <property type="status" value="NOT_ANNOTATED_CDS"/>
    <property type="molecule type" value="Genomic_DNA"/>
</dbReference>
<dbReference type="EMBL" id="BC034104">
    <property type="protein sequence ID" value="AAH34104.1"/>
    <property type="molecule type" value="mRNA"/>
</dbReference>
<dbReference type="CCDS" id="CCDS18270.1"/>
<dbReference type="RefSeq" id="NP_001155254.1">
    <property type="nucleotide sequence ID" value="NM_001161782.1"/>
</dbReference>
<dbReference type="RefSeq" id="NP_444314.2">
    <property type="nucleotide sequence ID" value="NM_053084.2"/>
</dbReference>
<dbReference type="RefSeq" id="XP_006538298.1">
    <property type="nucleotide sequence ID" value="XM_006538235.2"/>
</dbReference>
<dbReference type="RefSeq" id="XP_006538299.1">
    <property type="nucleotide sequence ID" value="XM_006538236.5"/>
</dbReference>
<dbReference type="RefSeq" id="XP_006538300.1">
    <property type="nucleotide sequence ID" value="XM_006538237.2"/>
</dbReference>
<dbReference type="RefSeq" id="XP_006538301.1">
    <property type="nucleotide sequence ID" value="XM_006538238.3"/>
</dbReference>
<dbReference type="RefSeq" id="XP_030109625.1">
    <property type="nucleotide sequence ID" value="XM_030253765.2"/>
</dbReference>
<dbReference type="SMR" id="Q8CH72"/>
<dbReference type="BioGRID" id="213691">
    <property type="interactions" value="30"/>
</dbReference>
<dbReference type="FunCoup" id="Q8CH72">
    <property type="interactions" value="2460"/>
</dbReference>
<dbReference type="IntAct" id="Q8CH72">
    <property type="interactions" value="9"/>
</dbReference>
<dbReference type="STRING" id="10090.ENSMUSP00000062277"/>
<dbReference type="iPTMnet" id="Q8CH72"/>
<dbReference type="PhosphoSitePlus" id="Q8CH72"/>
<dbReference type="SwissPalm" id="Q8CH72"/>
<dbReference type="PaxDb" id="10090-ENSMUSP00000062277"/>
<dbReference type="ProteomicsDB" id="259317"/>
<dbReference type="Pumba" id="Q8CH72"/>
<dbReference type="Antibodypedia" id="15684">
    <property type="antibodies" value="204 antibodies from 32 providers"/>
</dbReference>
<dbReference type="DNASU" id="69807"/>
<dbReference type="Ensembl" id="ENSMUST00000050850.14">
    <property type="protein sequence ID" value="ENSMUSP00000062277.8"/>
    <property type="gene ID" value="ENSMUSG00000051675.14"/>
</dbReference>
<dbReference type="Ensembl" id="ENSMUST00000107366.2">
    <property type="protein sequence ID" value="ENSMUSP00000102989.2"/>
    <property type="gene ID" value="ENSMUSG00000051675.14"/>
</dbReference>
<dbReference type="GeneID" id="69807"/>
<dbReference type="KEGG" id="mmu:69807"/>
<dbReference type="UCSC" id="uc008thq.2">
    <property type="organism name" value="mouse"/>
</dbReference>
<dbReference type="AGR" id="MGI:1917057"/>
<dbReference type="CTD" id="22954"/>
<dbReference type="MGI" id="MGI:1917057">
    <property type="gene designation" value="Trim32"/>
</dbReference>
<dbReference type="VEuPathDB" id="HostDB:ENSMUSG00000051675"/>
<dbReference type="eggNOG" id="KOG2177">
    <property type="taxonomic scope" value="Eukaryota"/>
</dbReference>
<dbReference type="GeneTree" id="ENSGT00940000160949"/>
<dbReference type="HOGENOM" id="CLU_423860_0_0_1"/>
<dbReference type="InParanoid" id="Q8CH72"/>
<dbReference type="OMA" id="LPTMFQL"/>
<dbReference type="OrthoDB" id="6105938at2759"/>
<dbReference type="PhylomeDB" id="Q8CH72"/>
<dbReference type="TreeFam" id="TF331018"/>
<dbReference type="Reactome" id="R-MMU-3134975">
    <property type="pathway name" value="Regulation of innate immune responses to cytosolic DNA"/>
</dbReference>
<dbReference type="Reactome" id="R-MMU-983168">
    <property type="pathway name" value="Antigen processing: Ubiquitination &amp; Proteasome degradation"/>
</dbReference>
<dbReference type="UniPathway" id="UPA00143"/>
<dbReference type="BioGRID-ORCS" id="69807">
    <property type="hits" value="4 hits in 77 CRISPR screens"/>
</dbReference>
<dbReference type="CD-CODE" id="CE726F99">
    <property type="entry name" value="Postsynaptic density"/>
</dbReference>
<dbReference type="ChiTaRS" id="Trim32">
    <property type="organism name" value="mouse"/>
</dbReference>
<dbReference type="PRO" id="PR:Q8CH72"/>
<dbReference type="Proteomes" id="UP000000589">
    <property type="component" value="Chromosome 4"/>
</dbReference>
<dbReference type="RNAct" id="Q8CH72">
    <property type="molecule type" value="protein"/>
</dbReference>
<dbReference type="Bgee" id="ENSMUSG00000051675">
    <property type="expression patterns" value="Expressed in dorsomedial nucleus of hypothalamus and 259 other cell types or tissues"/>
</dbReference>
<dbReference type="ExpressionAtlas" id="Q8CH72">
    <property type="expression patterns" value="baseline and differential"/>
</dbReference>
<dbReference type="GO" id="GO:0005776">
    <property type="term" value="C:autophagosome"/>
    <property type="evidence" value="ECO:0007669"/>
    <property type="project" value="Ensembl"/>
</dbReference>
<dbReference type="GO" id="GO:0005813">
    <property type="term" value="C:centrosome"/>
    <property type="evidence" value="ECO:0007669"/>
    <property type="project" value="Ensembl"/>
</dbReference>
<dbReference type="GO" id="GO:0005737">
    <property type="term" value="C:cytoplasm"/>
    <property type="evidence" value="ECO:0000250"/>
    <property type="project" value="BHF-UCL"/>
</dbReference>
<dbReference type="GO" id="GO:0005634">
    <property type="term" value="C:nucleus"/>
    <property type="evidence" value="ECO:0000314"/>
    <property type="project" value="MGI"/>
</dbReference>
<dbReference type="GO" id="GO:0005863">
    <property type="term" value="C:striated muscle myosin thick filament"/>
    <property type="evidence" value="ECO:0000314"/>
    <property type="project" value="MGI"/>
</dbReference>
<dbReference type="GO" id="GO:0042802">
    <property type="term" value="F:identical protein binding"/>
    <property type="evidence" value="ECO:0000353"/>
    <property type="project" value="MGI"/>
</dbReference>
<dbReference type="GO" id="GO:0017022">
    <property type="term" value="F:myosin binding"/>
    <property type="evidence" value="ECO:0000353"/>
    <property type="project" value="MGI"/>
</dbReference>
<dbReference type="GO" id="GO:0003723">
    <property type="term" value="F:RNA binding"/>
    <property type="evidence" value="ECO:0000314"/>
    <property type="project" value="BHF-UCL"/>
</dbReference>
<dbReference type="GO" id="GO:0003713">
    <property type="term" value="F:transcription coactivator activity"/>
    <property type="evidence" value="ECO:0007669"/>
    <property type="project" value="Ensembl"/>
</dbReference>
<dbReference type="GO" id="GO:0031369">
    <property type="term" value="F:translation initiation factor binding"/>
    <property type="evidence" value="ECO:0000353"/>
    <property type="project" value="MGI"/>
</dbReference>
<dbReference type="GO" id="GO:0043130">
    <property type="term" value="F:ubiquitin binding"/>
    <property type="evidence" value="ECO:0000250"/>
    <property type="project" value="BHF-UCL"/>
</dbReference>
<dbReference type="GO" id="GO:0061630">
    <property type="term" value="F:ubiquitin protein ligase activity"/>
    <property type="evidence" value="ECO:0000314"/>
    <property type="project" value="BHF-UCL"/>
</dbReference>
<dbReference type="GO" id="GO:0004842">
    <property type="term" value="F:ubiquitin-protein transferase activity"/>
    <property type="evidence" value="ECO:0000315"/>
    <property type="project" value="MGI"/>
</dbReference>
<dbReference type="GO" id="GO:0008270">
    <property type="term" value="F:zinc ion binding"/>
    <property type="evidence" value="ECO:0007669"/>
    <property type="project" value="UniProtKB-KW"/>
</dbReference>
<dbReference type="GO" id="GO:0007014">
    <property type="term" value="P:actin ubiquitination"/>
    <property type="evidence" value="ECO:0000314"/>
    <property type="project" value="MGI"/>
</dbReference>
<dbReference type="GO" id="GO:0000045">
    <property type="term" value="P:autophagosome assembly"/>
    <property type="evidence" value="ECO:0007669"/>
    <property type="project" value="Ensembl"/>
</dbReference>
<dbReference type="GO" id="GO:0061564">
    <property type="term" value="P:axon development"/>
    <property type="evidence" value="ECO:0000315"/>
    <property type="project" value="MGI"/>
</dbReference>
<dbReference type="GO" id="GO:0033554">
    <property type="term" value="P:cellular response to stress"/>
    <property type="evidence" value="ECO:0007669"/>
    <property type="project" value="Ensembl"/>
</dbReference>
<dbReference type="GO" id="GO:0045444">
    <property type="term" value="P:fat cell differentiation"/>
    <property type="evidence" value="ECO:0000270"/>
    <property type="project" value="BHF-UCL"/>
</dbReference>
<dbReference type="GO" id="GO:0010994">
    <property type="term" value="P:free ubiquitin chain polymerization"/>
    <property type="evidence" value="ECO:0000250"/>
    <property type="project" value="UniProtKB"/>
</dbReference>
<dbReference type="GO" id="GO:0045087">
    <property type="term" value="P:innate immune response"/>
    <property type="evidence" value="ECO:0007669"/>
    <property type="project" value="Ensembl"/>
</dbReference>
<dbReference type="GO" id="GO:0046716">
    <property type="term" value="P:muscle cell cellular homeostasis"/>
    <property type="evidence" value="ECO:0000315"/>
    <property type="project" value="MGI"/>
</dbReference>
<dbReference type="GO" id="GO:1902018">
    <property type="term" value="P:negative regulation of cilium assembly"/>
    <property type="evidence" value="ECO:0007669"/>
    <property type="project" value="Ensembl"/>
</dbReference>
<dbReference type="GO" id="GO:0048147">
    <property type="term" value="P:negative regulation of fibroblast proliferation"/>
    <property type="evidence" value="ECO:0000270"/>
    <property type="project" value="BHF-UCL"/>
</dbReference>
<dbReference type="GO" id="GO:1902230">
    <property type="term" value="P:negative regulation of intrinsic apoptotic signaling pathway in response to DNA damage"/>
    <property type="evidence" value="ECO:0000250"/>
    <property type="project" value="BHF-UCL"/>
</dbReference>
<dbReference type="GO" id="GO:1902173">
    <property type="term" value="P:negative regulation of keratinocyte apoptotic process"/>
    <property type="evidence" value="ECO:0000303"/>
    <property type="project" value="BHF-UCL"/>
</dbReference>
<dbReference type="GO" id="GO:0034144">
    <property type="term" value="P:negative regulation of toll-like receptor 4 signaling pathway"/>
    <property type="evidence" value="ECO:0007669"/>
    <property type="project" value="Ensembl"/>
</dbReference>
<dbReference type="GO" id="GO:0032897">
    <property type="term" value="P:negative regulation of viral transcription"/>
    <property type="evidence" value="ECO:0007669"/>
    <property type="project" value="Ensembl"/>
</dbReference>
<dbReference type="GO" id="GO:2000786">
    <property type="term" value="P:positive regulation of autophagosome assembly"/>
    <property type="evidence" value="ECO:0007669"/>
    <property type="project" value="Ensembl"/>
</dbReference>
<dbReference type="GO" id="GO:0010508">
    <property type="term" value="P:positive regulation of autophagy"/>
    <property type="evidence" value="ECO:0000250"/>
    <property type="project" value="UniProtKB"/>
</dbReference>
<dbReference type="GO" id="GO:0043123">
    <property type="term" value="P:positive regulation of canonical NF-kappaB signal transduction"/>
    <property type="evidence" value="ECO:0000314"/>
    <property type="project" value="BHF-UCL"/>
</dbReference>
<dbReference type="GO" id="GO:0045787">
    <property type="term" value="P:positive regulation of cell cycle"/>
    <property type="evidence" value="ECO:0000250"/>
    <property type="project" value="BHF-UCL"/>
</dbReference>
<dbReference type="GO" id="GO:0030307">
    <property type="term" value="P:positive regulation of cell growth"/>
    <property type="evidence" value="ECO:0000250"/>
    <property type="project" value="BHF-UCL"/>
</dbReference>
<dbReference type="GO" id="GO:0030335">
    <property type="term" value="P:positive regulation of cell migration"/>
    <property type="evidence" value="ECO:0000250"/>
    <property type="project" value="BHF-UCL"/>
</dbReference>
<dbReference type="GO" id="GO:2000147">
    <property type="term" value="P:positive regulation of cell motility"/>
    <property type="evidence" value="ECO:0000314"/>
    <property type="project" value="BHF-UCL"/>
</dbReference>
<dbReference type="GO" id="GO:1903886">
    <property type="term" value="P:positive regulation of chemokine (C-C motif) ligand 20 production"/>
    <property type="evidence" value="ECO:0000315"/>
    <property type="project" value="MGI"/>
</dbReference>
<dbReference type="GO" id="GO:1903883">
    <property type="term" value="P:positive regulation of interleukin-17-mediated signaling pathway"/>
    <property type="evidence" value="ECO:0000315"/>
    <property type="project" value="MGI"/>
</dbReference>
<dbReference type="GO" id="GO:0050769">
    <property type="term" value="P:positive regulation of neurogenesis"/>
    <property type="evidence" value="ECO:0000314"/>
    <property type="project" value="BHF-UCL"/>
</dbReference>
<dbReference type="GO" id="GO:0045666">
    <property type="term" value="P:positive regulation of neuron differentiation"/>
    <property type="evidence" value="ECO:0000314"/>
    <property type="project" value="BHF-UCL"/>
</dbReference>
<dbReference type="GO" id="GO:0045732">
    <property type="term" value="P:positive regulation of protein catabolic process"/>
    <property type="evidence" value="ECO:0000314"/>
    <property type="project" value="BHF-UCL"/>
</dbReference>
<dbReference type="GO" id="GO:0045862">
    <property type="term" value="P:positive regulation of proteolysis"/>
    <property type="evidence" value="ECO:0000250"/>
    <property type="project" value="BHF-UCL"/>
</dbReference>
<dbReference type="GO" id="GO:0051155">
    <property type="term" value="P:positive regulation of striated muscle cell differentiation"/>
    <property type="evidence" value="ECO:0000315"/>
    <property type="project" value="MGI"/>
</dbReference>
<dbReference type="GO" id="GO:1903265">
    <property type="term" value="P:positive regulation of tumor necrosis factor-mediated signaling pathway"/>
    <property type="evidence" value="ECO:0000315"/>
    <property type="project" value="MGI"/>
</dbReference>
<dbReference type="GO" id="GO:0070534">
    <property type="term" value="P:protein K63-linked ubiquitination"/>
    <property type="evidence" value="ECO:0007669"/>
    <property type="project" value="Ensembl"/>
</dbReference>
<dbReference type="GO" id="GO:0000209">
    <property type="term" value="P:protein polyubiquitination"/>
    <property type="evidence" value="ECO:0000315"/>
    <property type="project" value="MGI"/>
</dbReference>
<dbReference type="GO" id="GO:0016567">
    <property type="term" value="P:protein ubiquitination"/>
    <property type="evidence" value="ECO:0000314"/>
    <property type="project" value="BHF-UCL"/>
</dbReference>
<dbReference type="GO" id="GO:0006979">
    <property type="term" value="P:response to oxidative stress"/>
    <property type="evidence" value="ECO:0007669"/>
    <property type="project" value="Ensembl"/>
</dbReference>
<dbReference type="GO" id="GO:0042594">
    <property type="term" value="P:response to starvation"/>
    <property type="evidence" value="ECO:0007669"/>
    <property type="project" value="Ensembl"/>
</dbReference>
<dbReference type="GO" id="GO:0034612">
    <property type="term" value="P:response to tumor necrosis factor"/>
    <property type="evidence" value="ECO:0000314"/>
    <property type="project" value="BHF-UCL"/>
</dbReference>
<dbReference type="GO" id="GO:0009411">
    <property type="term" value="P:response to UV"/>
    <property type="evidence" value="ECO:0000314"/>
    <property type="project" value="BHF-UCL"/>
</dbReference>
<dbReference type="GO" id="GO:0044790">
    <property type="term" value="P:suppression of viral release by host"/>
    <property type="evidence" value="ECO:0007669"/>
    <property type="project" value="Ensembl"/>
</dbReference>
<dbReference type="GO" id="GO:0001894">
    <property type="term" value="P:tissue homeostasis"/>
    <property type="evidence" value="ECO:0000315"/>
    <property type="project" value="MGI"/>
</dbReference>
<dbReference type="GO" id="GO:0006511">
    <property type="term" value="P:ubiquitin-dependent protein catabolic process"/>
    <property type="evidence" value="ECO:0000250"/>
    <property type="project" value="BHF-UCL"/>
</dbReference>
<dbReference type="CDD" id="cd19806">
    <property type="entry name" value="Bbox1_TRIM32_C-VII"/>
    <property type="match status" value="1"/>
</dbReference>
<dbReference type="CDD" id="cd14961">
    <property type="entry name" value="NHL_TRIM32_like"/>
    <property type="match status" value="1"/>
</dbReference>
<dbReference type="CDD" id="cd16587">
    <property type="entry name" value="RING-HC_TRIM32_C-VII"/>
    <property type="match status" value="1"/>
</dbReference>
<dbReference type="FunFam" id="2.120.10.30:FF:000034">
    <property type="entry name" value="E3 ubiquitin-protein ligase TRIM32"/>
    <property type="match status" value="1"/>
</dbReference>
<dbReference type="FunFam" id="2.120.10.30:FF:000039">
    <property type="entry name" value="E3 ubiquitin-protein ligase TRIM32"/>
    <property type="match status" value="1"/>
</dbReference>
<dbReference type="FunFam" id="3.30.40.10:FF:000314">
    <property type="entry name" value="E3 ubiquitin-protein ligase TRIM32"/>
    <property type="match status" value="1"/>
</dbReference>
<dbReference type="Gene3D" id="3.30.160.60">
    <property type="entry name" value="Classic Zinc Finger"/>
    <property type="match status" value="1"/>
</dbReference>
<dbReference type="Gene3D" id="2.120.10.30">
    <property type="entry name" value="TolB, C-terminal domain"/>
    <property type="match status" value="2"/>
</dbReference>
<dbReference type="Gene3D" id="3.30.40.10">
    <property type="entry name" value="Zinc/RING finger domain, C3HC4 (zinc finger)"/>
    <property type="match status" value="1"/>
</dbReference>
<dbReference type="InterPro" id="IPR011042">
    <property type="entry name" value="6-blade_b-propeller_TolB-like"/>
</dbReference>
<dbReference type="InterPro" id="IPR001258">
    <property type="entry name" value="NHL_repeat"/>
</dbReference>
<dbReference type="InterPro" id="IPR047051">
    <property type="entry name" value="TRIM32_Bbox1_Znf"/>
</dbReference>
<dbReference type="InterPro" id="IPR027370">
    <property type="entry name" value="Znf-RING_euk"/>
</dbReference>
<dbReference type="InterPro" id="IPR000315">
    <property type="entry name" value="Znf_B-box"/>
</dbReference>
<dbReference type="InterPro" id="IPR001841">
    <property type="entry name" value="Znf_RING"/>
</dbReference>
<dbReference type="InterPro" id="IPR013083">
    <property type="entry name" value="Znf_RING/FYVE/PHD"/>
</dbReference>
<dbReference type="InterPro" id="IPR017907">
    <property type="entry name" value="Znf_RING_CS"/>
</dbReference>
<dbReference type="PANTHER" id="PTHR25464:SF3">
    <property type="entry name" value="E3 UBIQUITIN-PROTEIN LIGASE TRIM32"/>
    <property type="match status" value="1"/>
</dbReference>
<dbReference type="PANTHER" id="PTHR25464">
    <property type="entry name" value="TRIPARTITE MOTIF-CONTAINING PROTEIN 2-LIKE PROTEIN"/>
    <property type="match status" value="1"/>
</dbReference>
<dbReference type="Pfam" id="PF01436">
    <property type="entry name" value="NHL"/>
    <property type="match status" value="3"/>
</dbReference>
<dbReference type="Pfam" id="PF13445">
    <property type="entry name" value="zf-RING_UBOX"/>
    <property type="match status" value="1"/>
</dbReference>
<dbReference type="SMART" id="SM00336">
    <property type="entry name" value="BBOX"/>
    <property type="match status" value="1"/>
</dbReference>
<dbReference type="SMART" id="SM00184">
    <property type="entry name" value="RING"/>
    <property type="match status" value="1"/>
</dbReference>
<dbReference type="SUPFAM" id="SSF57845">
    <property type="entry name" value="B-box zinc-binding domain"/>
    <property type="match status" value="1"/>
</dbReference>
<dbReference type="SUPFAM" id="SSF101898">
    <property type="entry name" value="NHL repeat"/>
    <property type="match status" value="1"/>
</dbReference>
<dbReference type="SUPFAM" id="SSF57850">
    <property type="entry name" value="RING/U-box"/>
    <property type="match status" value="1"/>
</dbReference>
<dbReference type="PROSITE" id="PS51125">
    <property type="entry name" value="NHL"/>
    <property type="match status" value="5"/>
</dbReference>
<dbReference type="PROSITE" id="PS50119">
    <property type="entry name" value="ZF_BBOX"/>
    <property type="match status" value="1"/>
</dbReference>
<dbReference type="PROSITE" id="PS00518">
    <property type="entry name" value="ZF_RING_1"/>
    <property type="match status" value="1"/>
</dbReference>
<dbReference type="PROSITE" id="PS50089">
    <property type="entry name" value="ZF_RING_2"/>
    <property type="match status" value="1"/>
</dbReference>
<evidence type="ECO:0000250" key="1">
    <source>
        <dbReference type="UniProtKB" id="Q13049"/>
    </source>
</evidence>
<evidence type="ECO:0000255" key="2"/>
<evidence type="ECO:0000255" key="3">
    <source>
        <dbReference type="PROSITE-ProRule" id="PRU00024"/>
    </source>
</evidence>
<evidence type="ECO:0000255" key="4">
    <source>
        <dbReference type="PROSITE-ProRule" id="PRU00175"/>
    </source>
</evidence>
<evidence type="ECO:0000256" key="5">
    <source>
        <dbReference type="SAM" id="MobiDB-lite"/>
    </source>
</evidence>
<evidence type="ECO:0000269" key="6">
    <source>
    </source>
</evidence>
<evidence type="ECO:0000269" key="7">
    <source>
    </source>
</evidence>
<evidence type="ECO:0000269" key="8">
    <source>
    </source>
</evidence>
<evidence type="ECO:0000269" key="9">
    <source>
    </source>
</evidence>
<evidence type="ECO:0000305" key="10"/>
<evidence type="ECO:0000312" key="11">
    <source>
        <dbReference type="MGI" id="MGI:1917057"/>
    </source>
</evidence>
<evidence type="ECO:0007744" key="12">
    <source>
    </source>
</evidence>